<sequence>MQICLMDETGATDGALSVLAARWGLEHDEDNPMALVLTPQHLELRKRDEPKLGGIFVDFVGGAMAHRRKFGGGRGEAVAKAVGIKGDYLPDVVDATAGLGRDAFVLASVGCRVRMLERNPVVAALLDDGLTRGYADADIGGWLQERLQLIHASSLTALTDITPRPQVVYLDPMFPHRQKSALVKKEMRVFQSLVGPDLDADGLLEPARQLATKRVVVKRPDYAPPLADVATPNAVVTKGHRFDIYAGTPLTE</sequence>
<comment type="function">
    <text evidence="1">Specifically methylates the guanosine in position 1516 of 16S rRNA.</text>
</comment>
<comment type="catalytic activity">
    <reaction evidence="1">
        <text>guanosine(1516) in 16S rRNA + S-adenosyl-L-methionine = N(2)-methylguanosine(1516) in 16S rRNA + S-adenosyl-L-homocysteine + H(+)</text>
        <dbReference type="Rhea" id="RHEA:43220"/>
        <dbReference type="Rhea" id="RHEA-COMP:10412"/>
        <dbReference type="Rhea" id="RHEA-COMP:10413"/>
        <dbReference type="ChEBI" id="CHEBI:15378"/>
        <dbReference type="ChEBI" id="CHEBI:57856"/>
        <dbReference type="ChEBI" id="CHEBI:59789"/>
        <dbReference type="ChEBI" id="CHEBI:74269"/>
        <dbReference type="ChEBI" id="CHEBI:74481"/>
        <dbReference type="EC" id="2.1.1.242"/>
    </reaction>
</comment>
<comment type="subcellular location">
    <subcellularLocation>
        <location evidence="1">Cytoplasm</location>
    </subcellularLocation>
</comment>
<comment type="similarity">
    <text evidence="1">Belongs to the methyltransferase superfamily. RsmJ family.</text>
</comment>
<comment type="sequence caution" evidence="2">
    <conflict type="erroneous initiation">
        <sequence resource="EMBL-CDS" id="ACN47744"/>
    </conflict>
    <text>Truncated N-terminus.</text>
</comment>
<protein>
    <recommendedName>
        <fullName evidence="1">Ribosomal RNA small subunit methyltransferase J</fullName>
        <ecNumber evidence="1">2.1.1.242</ecNumber>
    </recommendedName>
    <alternativeName>
        <fullName evidence="1">16S rRNA m2G1516 methyltransferase</fullName>
    </alternativeName>
    <alternativeName>
        <fullName evidence="1">rRNA (guanine-N(2)-)-methyltransferase</fullName>
    </alternativeName>
</protein>
<keyword id="KW-0963">Cytoplasm</keyword>
<keyword id="KW-0489">Methyltransferase</keyword>
<keyword id="KW-0698">rRNA processing</keyword>
<keyword id="KW-0949">S-adenosyl-L-methionine</keyword>
<keyword id="KW-0808">Transferase</keyword>
<accession>C0Q148</accession>
<organism>
    <name type="scientific">Salmonella paratyphi C (strain RKS4594)</name>
    <dbReference type="NCBI Taxonomy" id="476213"/>
    <lineage>
        <taxon>Bacteria</taxon>
        <taxon>Pseudomonadati</taxon>
        <taxon>Pseudomonadota</taxon>
        <taxon>Gammaproteobacteria</taxon>
        <taxon>Enterobacterales</taxon>
        <taxon>Enterobacteriaceae</taxon>
        <taxon>Salmonella</taxon>
    </lineage>
</organism>
<evidence type="ECO:0000255" key="1">
    <source>
        <dbReference type="HAMAP-Rule" id="MF_01523"/>
    </source>
</evidence>
<evidence type="ECO:0000305" key="2"/>
<name>RSMJ_SALPC</name>
<feature type="chain" id="PRO_0000383386" description="Ribosomal RNA small subunit methyltransferase J">
    <location>
        <begin position="1"/>
        <end position="252"/>
    </location>
</feature>
<feature type="binding site" evidence="1">
    <location>
        <begin position="101"/>
        <end position="102"/>
    </location>
    <ligand>
        <name>S-adenosyl-L-methionine</name>
        <dbReference type="ChEBI" id="CHEBI:59789"/>
    </ligand>
</feature>
<feature type="binding site" evidence="1">
    <location>
        <begin position="117"/>
        <end position="118"/>
    </location>
    <ligand>
        <name>S-adenosyl-L-methionine</name>
        <dbReference type="ChEBI" id="CHEBI:59789"/>
    </ligand>
</feature>
<feature type="binding site" evidence="1">
    <location>
        <begin position="153"/>
        <end position="154"/>
    </location>
    <ligand>
        <name>S-adenosyl-L-methionine</name>
        <dbReference type="ChEBI" id="CHEBI:59789"/>
    </ligand>
</feature>
<feature type="binding site" evidence="1">
    <location>
        <position position="171"/>
    </location>
    <ligand>
        <name>S-adenosyl-L-methionine</name>
        <dbReference type="ChEBI" id="CHEBI:59789"/>
    </ligand>
</feature>
<dbReference type="EC" id="2.1.1.242" evidence="1"/>
<dbReference type="EMBL" id="CP000857">
    <property type="protein sequence ID" value="ACN47744.1"/>
    <property type="status" value="ALT_INIT"/>
    <property type="molecule type" value="Genomic_DNA"/>
</dbReference>
<dbReference type="RefSeq" id="WP_001165128.1">
    <property type="nucleotide sequence ID" value="NC_012125.1"/>
</dbReference>
<dbReference type="SMR" id="C0Q148"/>
<dbReference type="KEGG" id="sei:SPC_3663"/>
<dbReference type="HOGENOM" id="CLU_076324_0_0_6"/>
<dbReference type="Proteomes" id="UP000001599">
    <property type="component" value="Chromosome"/>
</dbReference>
<dbReference type="GO" id="GO:0005737">
    <property type="term" value="C:cytoplasm"/>
    <property type="evidence" value="ECO:0007669"/>
    <property type="project" value="UniProtKB-SubCell"/>
</dbReference>
<dbReference type="GO" id="GO:0008990">
    <property type="term" value="F:rRNA (guanine-N2-)-methyltransferase activity"/>
    <property type="evidence" value="ECO:0007669"/>
    <property type="project" value="UniProtKB-UniRule"/>
</dbReference>
<dbReference type="CDD" id="cd02440">
    <property type="entry name" value="AdoMet_MTases"/>
    <property type="match status" value="1"/>
</dbReference>
<dbReference type="FunFam" id="3.40.1630.10:FF:000001">
    <property type="entry name" value="Ribosomal RNA small subunit methyltransferase J"/>
    <property type="match status" value="1"/>
</dbReference>
<dbReference type="FunFam" id="3.40.50.150:FF:000072">
    <property type="entry name" value="Ribosomal RNA small subunit methyltransferase J"/>
    <property type="match status" value="1"/>
</dbReference>
<dbReference type="Gene3D" id="3.40.50.150">
    <property type="entry name" value="Vaccinia Virus protein VP39"/>
    <property type="match status" value="1"/>
</dbReference>
<dbReference type="Gene3D" id="3.40.1630.10">
    <property type="entry name" value="YhiQ-like domain"/>
    <property type="match status" value="1"/>
</dbReference>
<dbReference type="HAMAP" id="MF_01523">
    <property type="entry name" value="16SrRNA_methyltr_J"/>
    <property type="match status" value="1"/>
</dbReference>
<dbReference type="InterPro" id="IPR007536">
    <property type="entry name" value="16SrRNA_methylTrfase_J"/>
</dbReference>
<dbReference type="InterPro" id="IPR029063">
    <property type="entry name" value="SAM-dependent_MTases_sf"/>
</dbReference>
<dbReference type="NCBIfam" id="NF008012">
    <property type="entry name" value="PRK10742.1"/>
    <property type="match status" value="1"/>
</dbReference>
<dbReference type="PANTHER" id="PTHR36112">
    <property type="entry name" value="RIBOSOMAL RNA SMALL SUBUNIT METHYLTRANSFERASE J"/>
    <property type="match status" value="1"/>
</dbReference>
<dbReference type="PANTHER" id="PTHR36112:SF1">
    <property type="entry name" value="RIBOSOMAL RNA SMALL SUBUNIT METHYLTRANSFERASE J"/>
    <property type="match status" value="1"/>
</dbReference>
<dbReference type="Pfam" id="PF04445">
    <property type="entry name" value="SAM_MT"/>
    <property type="match status" value="1"/>
</dbReference>
<dbReference type="SUPFAM" id="SSF53335">
    <property type="entry name" value="S-adenosyl-L-methionine-dependent methyltransferases"/>
    <property type="match status" value="1"/>
</dbReference>
<reference key="1">
    <citation type="journal article" date="2009" name="PLoS ONE">
        <title>Salmonella paratyphi C: genetic divergence from Salmonella choleraesuis and pathogenic convergence with Salmonella typhi.</title>
        <authorList>
            <person name="Liu W.-Q."/>
            <person name="Feng Y."/>
            <person name="Wang Y."/>
            <person name="Zou Q.-H."/>
            <person name="Chen F."/>
            <person name="Guo J.-T."/>
            <person name="Peng Y.-H."/>
            <person name="Jin Y."/>
            <person name="Li Y.-G."/>
            <person name="Hu S.-N."/>
            <person name="Johnston R.N."/>
            <person name="Liu G.-R."/>
            <person name="Liu S.-L."/>
        </authorList>
    </citation>
    <scope>NUCLEOTIDE SEQUENCE [LARGE SCALE GENOMIC DNA]</scope>
    <source>
        <strain>RKS4594</strain>
    </source>
</reference>
<proteinExistence type="inferred from homology"/>
<gene>
    <name evidence="1" type="primary">rsmJ</name>
    <name type="synonym">yhiQ</name>
    <name type="ordered locus">SPC_3663</name>
</gene>